<reference key="1">
    <citation type="journal article" date="2005" name="Science">
        <title>The transcriptional landscape of the mammalian genome.</title>
        <authorList>
            <person name="Carninci P."/>
            <person name="Kasukawa T."/>
            <person name="Katayama S."/>
            <person name="Gough J."/>
            <person name="Frith M.C."/>
            <person name="Maeda N."/>
            <person name="Oyama R."/>
            <person name="Ravasi T."/>
            <person name="Lenhard B."/>
            <person name="Wells C."/>
            <person name="Kodzius R."/>
            <person name="Shimokawa K."/>
            <person name="Bajic V.B."/>
            <person name="Brenner S.E."/>
            <person name="Batalov S."/>
            <person name="Forrest A.R."/>
            <person name="Zavolan M."/>
            <person name="Davis M.J."/>
            <person name="Wilming L.G."/>
            <person name="Aidinis V."/>
            <person name="Allen J.E."/>
            <person name="Ambesi-Impiombato A."/>
            <person name="Apweiler R."/>
            <person name="Aturaliya R.N."/>
            <person name="Bailey T.L."/>
            <person name="Bansal M."/>
            <person name="Baxter L."/>
            <person name="Beisel K.W."/>
            <person name="Bersano T."/>
            <person name="Bono H."/>
            <person name="Chalk A.M."/>
            <person name="Chiu K.P."/>
            <person name="Choudhary V."/>
            <person name="Christoffels A."/>
            <person name="Clutterbuck D.R."/>
            <person name="Crowe M.L."/>
            <person name="Dalla E."/>
            <person name="Dalrymple B.P."/>
            <person name="de Bono B."/>
            <person name="Della Gatta G."/>
            <person name="di Bernardo D."/>
            <person name="Down T."/>
            <person name="Engstrom P."/>
            <person name="Fagiolini M."/>
            <person name="Faulkner G."/>
            <person name="Fletcher C.F."/>
            <person name="Fukushima T."/>
            <person name="Furuno M."/>
            <person name="Futaki S."/>
            <person name="Gariboldi M."/>
            <person name="Georgii-Hemming P."/>
            <person name="Gingeras T.R."/>
            <person name="Gojobori T."/>
            <person name="Green R.E."/>
            <person name="Gustincich S."/>
            <person name="Harbers M."/>
            <person name="Hayashi Y."/>
            <person name="Hensch T.K."/>
            <person name="Hirokawa N."/>
            <person name="Hill D."/>
            <person name="Huminiecki L."/>
            <person name="Iacono M."/>
            <person name="Ikeo K."/>
            <person name="Iwama A."/>
            <person name="Ishikawa T."/>
            <person name="Jakt M."/>
            <person name="Kanapin A."/>
            <person name="Katoh M."/>
            <person name="Kawasawa Y."/>
            <person name="Kelso J."/>
            <person name="Kitamura H."/>
            <person name="Kitano H."/>
            <person name="Kollias G."/>
            <person name="Krishnan S.P."/>
            <person name="Kruger A."/>
            <person name="Kummerfeld S.K."/>
            <person name="Kurochkin I.V."/>
            <person name="Lareau L.F."/>
            <person name="Lazarevic D."/>
            <person name="Lipovich L."/>
            <person name="Liu J."/>
            <person name="Liuni S."/>
            <person name="McWilliam S."/>
            <person name="Madan Babu M."/>
            <person name="Madera M."/>
            <person name="Marchionni L."/>
            <person name="Matsuda H."/>
            <person name="Matsuzawa S."/>
            <person name="Miki H."/>
            <person name="Mignone F."/>
            <person name="Miyake S."/>
            <person name="Morris K."/>
            <person name="Mottagui-Tabar S."/>
            <person name="Mulder N."/>
            <person name="Nakano N."/>
            <person name="Nakauchi H."/>
            <person name="Ng P."/>
            <person name="Nilsson R."/>
            <person name="Nishiguchi S."/>
            <person name="Nishikawa S."/>
            <person name="Nori F."/>
            <person name="Ohara O."/>
            <person name="Okazaki Y."/>
            <person name="Orlando V."/>
            <person name="Pang K.C."/>
            <person name="Pavan W.J."/>
            <person name="Pavesi G."/>
            <person name="Pesole G."/>
            <person name="Petrovsky N."/>
            <person name="Piazza S."/>
            <person name="Reed J."/>
            <person name="Reid J.F."/>
            <person name="Ring B.Z."/>
            <person name="Ringwald M."/>
            <person name="Rost B."/>
            <person name="Ruan Y."/>
            <person name="Salzberg S.L."/>
            <person name="Sandelin A."/>
            <person name="Schneider C."/>
            <person name="Schoenbach C."/>
            <person name="Sekiguchi K."/>
            <person name="Semple C.A."/>
            <person name="Seno S."/>
            <person name="Sessa L."/>
            <person name="Sheng Y."/>
            <person name="Shibata Y."/>
            <person name="Shimada H."/>
            <person name="Shimada K."/>
            <person name="Silva D."/>
            <person name="Sinclair B."/>
            <person name="Sperling S."/>
            <person name="Stupka E."/>
            <person name="Sugiura K."/>
            <person name="Sultana R."/>
            <person name="Takenaka Y."/>
            <person name="Taki K."/>
            <person name="Tammoja K."/>
            <person name="Tan S.L."/>
            <person name="Tang S."/>
            <person name="Taylor M.S."/>
            <person name="Tegner J."/>
            <person name="Teichmann S.A."/>
            <person name="Ueda H.R."/>
            <person name="van Nimwegen E."/>
            <person name="Verardo R."/>
            <person name="Wei C.L."/>
            <person name="Yagi K."/>
            <person name="Yamanishi H."/>
            <person name="Zabarovsky E."/>
            <person name="Zhu S."/>
            <person name="Zimmer A."/>
            <person name="Hide W."/>
            <person name="Bult C."/>
            <person name="Grimmond S.M."/>
            <person name="Teasdale R.D."/>
            <person name="Liu E.T."/>
            <person name="Brusic V."/>
            <person name="Quackenbush J."/>
            <person name="Wahlestedt C."/>
            <person name="Mattick J.S."/>
            <person name="Hume D.A."/>
            <person name="Kai C."/>
            <person name="Sasaki D."/>
            <person name="Tomaru Y."/>
            <person name="Fukuda S."/>
            <person name="Kanamori-Katayama M."/>
            <person name="Suzuki M."/>
            <person name="Aoki J."/>
            <person name="Arakawa T."/>
            <person name="Iida J."/>
            <person name="Imamura K."/>
            <person name="Itoh M."/>
            <person name="Kato T."/>
            <person name="Kawaji H."/>
            <person name="Kawagashira N."/>
            <person name="Kawashima T."/>
            <person name="Kojima M."/>
            <person name="Kondo S."/>
            <person name="Konno H."/>
            <person name="Nakano K."/>
            <person name="Ninomiya N."/>
            <person name="Nishio T."/>
            <person name="Okada M."/>
            <person name="Plessy C."/>
            <person name="Shibata K."/>
            <person name="Shiraki T."/>
            <person name="Suzuki S."/>
            <person name="Tagami M."/>
            <person name="Waki K."/>
            <person name="Watahiki A."/>
            <person name="Okamura-Oho Y."/>
            <person name="Suzuki H."/>
            <person name="Kawai J."/>
            <person name="Hayashizaki Y."/>
        </authorList>
    </citation>
    <scope>NUCLEOTIDE SEQUENCE [LARGE SCALE MRNA]</scope>
    <source>
        <strain>C57BL/6J</strain>
        <tissue>Bone marrow</tissue>
        <tissue>Cerebellum</tissue>
        <tissue>Embryo</tissue>
    </source>
</reference>
<reference key="2">
    <citation type="journal article" date="2004" name="Genome Res.">
        <title>The status, quality, and expansion of the NIH full-length cDNA project: the Mammalian Gene Collection (MGC).</title>
        <authorList>
            <consortium name="The MGC Project Team"/>
        </authorList>
    </citation>
    <scope>NUCLEOTIDE SEQUENCE [LARGE SCALE MRNA]</scope>
</reference>
<reference key="3">
    <citation type="journal article" date="2009" name="J. Clin. Invest.">
        <title>LEPROT and LEPROTL1 cooperatively decrease hepatic growth hormone action in mice.</title>
        <authorList>
            <person name="Touvier T."/>
            <person name="Conte-Auriol F."/>
            <person name="Briand O."/>
            <person name="Cudejko C."/>
            <person name="Paumelle R."/>
            <person name="Caron S."/>
            <person name="Bauge E."/>
            <person name="Rouille Y."/>
            <person name="Salles J.P."/>
            <person name="Staels B."/>
            <person name="Bailleul B."/>
        </authorList>
    </citation>
    <scope>FUNCTION</scope>
    <scope>INDUCTION</scope>
</reference>
<organism>
    <name type="scientific">Mus musculus</name>
    <name type="common">Mouse</name>
    <dbReference type="NCBI Taxonomy" id="10090"/>
    <lineage>
        <taxon>Eukaryota</taxon>
        <taxon>Metazoa</taxon>
        <taxon>Chordata</taxon>
        <taxon>Craniata</taxon>
        <taxon>Vertebrata</taxon>
        <taxon>Euteleostomi</taxon>
        <taxon>Mammalia</taxon>
        <taxon>Eutheria</taxon>
        <taxon>Euarchontoglires</taxon>
        <taxon>Glires</taxon>
        <taxon>Rodentia</taxon>
        <taxon>Myomorpha</taxon>
        <taxon>Muroidea</taxon>
        <taxon>Muridae</taxon>
        <taxon>Murinae</taxon>
        <taxon>Mus</taxon>
        <taxon>Mus</taxon>
    </lineage>
</organism>
<keyword id="KW-0472">Membrane</keyword>
<keyword id="KW-1185">Reference proteome</keyword>
<keyword id="KW-0812">Transmembrane</keyword>
<keyword id="KW-1133">Transmembrane helix</keyword>
<sequence length="131" mass="14414">MAGIKALISLSFGGAIGLMFLMLGCALPIYNQYWPLFVLFFYILSPIPYCIARRLVDDTDAMSNACKELAIFLTTGIVVSAFGLPVVFARAHLIEWGACALVLTGNTVIFATILGFFLVFGSNDDFSWQQW</sequence>
<feature type="chain" id="PRO_0000215198" description="Leptin receptor overlapping transcript-like 1">
    <location>
        <begin position="1"/>
        <end position="131"/>
    </location>
</feature>
<feature type="transmembrane region" description="Helical" evidence="2">
    <location>
        <begin position="7"/>
        <end position="27"/>
    </location>
</feature>
<feature type="transmembrane region" description="Helical" evidence="2">
    <location>
        <begin position="32"/>
        <end position="52"/>
    </location>
</feature>
<feature type="transmembrane region" description="Helical" evidence="2">
    <location>
        <begin position="69"/>
        <end position="89"/>
    </location>
</feature>
<feature type="transmembrane region" description="Helical" evidence="2">
    <location>
        <begin position="100"/>
        <end position="120"/>
    </location>
</feature>
<accession>Q9CQ74</accession>
<accession>Q3U662</accession>
<comment type="function">
    <text evidence="3">Negatively regulates growth hormone (GH) receptor cell surface expression in liver. May play a role in liver resistance to GH during periods of reduced nutrient availability.</text>
</comment>
<comment type="subunit">
    <text evidence="1">Interacts with RAB13.</text>
</comment>
<comment type="subcellular location">
    <subcellularLocation>
        <location evidence="4">Membrane</location>
        <topology evidence="4">Multi-pass membrane protein</topology>
    </subcellularLocation>
</comment>
<comment type="induction">
    <text evidence="3">Up-regulated in the liver of fasting animals.</text>
</comment>
<comment type="similarity">
    <text evidence="4">Belongs to the OB-RGRP/VPS55 family.</text>
</comment>
<proteinExistence type="evidence at transcript level"/>
<dbReference type="EMBL" id="AK003329">
    <property type="protein sequence ID" value="BAB22717.1"/>
    <property type="molecule type" value="mRNA"/>
</dbReference>
<dbReference type="EMBL" id="AK013870">
    <property type="protein sequence ID" value="BAB29025.1"/>
    <property type="molecule type" value="mRNA"/>
</dbReference>
<dbReference type="EMBL" id="AK075740">
    <property type="protein sequence ID" value="BAC35921.1"/>
    <property type="molecule type" value="mRNA"/>
</dbReference>
<dbReference type="EMBL" id="AK150289">
    <property type="protein sequence ID" value="BAE29444.1"/>
    <property type="molecule type" value="mRNA"/>
</dbReference>
<dbReference type="EMBL" id="AK153277">
    <property type="protein sequence ID" value="BAE31863.1"/>
    <property type="molecule type" value="mRNA"/>
</dbReference>
<dbReference type="EMBL" id="AK159401">
    <property type="protein sequence ID" value="BAE35053.1"/>
    <property type="molecule type" value="mRNA"/>
</dbReference>
<dbReference type="EMBL" id="BC004677">
    <property type="protein sequence ID" value="AAH04677.1"/>
    <property type="molecule type" value="mRNA"/>
</dbReference>
<dbReference type="CCDS" id="CCDS22239.1"/>
<dbReference type="RefSeq" id="NP_080885.1">
    <property type="nucleotide sequence ID" value="NM_026609.2"/>
</dbReference>
<dbReference type="SMR" id="Q9CQ74"/>
<dbReference type="BioGRID" id="212717">
    <property type="interactions" value="2"/>
</dbReference>
<dbReference type="FunCoup" id="Q9CQ74">
    <property type="interactions" value="2409"/>
</dbReference>
<dbReference type="STRING" id="10090.ENSMUSP00000033910"/>
<dbReference type="SwissPalm" id="Q9CQ74"/>
<dbReference type="PaxDb" id="10090-ENSMUSP00000033910"/>
<dbReference type="ProteomicsDB" id="265061"/>
<dbReference type="Pumba" id="Q9CQ74"/>
<dbReference type="Antibodypedia" id="63110">
    <property type="antibodies" value="17 antibodies from 9 providers"/>
</dbReference>
<dbReference type="DNASU" id="68192"/>
<dbReference type="Ensembl" id="ENSMUST00000033910.9">
    <property type="protein sequence ID" value="ENSMUSP00000033910.9"/>
    <property type="gene ID" value="ENSMUSG00000031513.9"/>
</dbReference>
<dbReference type="GeneID" id="68192"/>
<dbReference type="KEGG" id="mmu:68192"/>
<dbReference type="UCSC" id="uc009lkp.1">
    <property type="organism name" value="mouse"/>
</dbReference>
<dbReference type="AGR" id="MGI:1915442"/>
<dbReference type="CTD" id="23484"/>
<dbReference type="MGI" id="MGI:1915442">
    <property type="gene designation" value="Leprotl1"/>
</dbReference>
<dbReference type="VEuPathDB" id="HostDB:ENSMUSG00000031513"/>
<dbReference type="eggNOG" id="KOG2174">
    <property type="taxonomic scope" value="Eukaryota"/>
</dbReference>
<dbReference type="GeneTree" id="ENSGT00390000006503"/>
<dbReference type="HOGENOM" id="CLU_134810_2_2_1"/>
<dbReference type="InParanoid" id="Q9CQ74"/>
<dbReference type="OMA" id="ICARCAN"/>
<dbReference type="OrthoDB" id="14246at2759"/>
<dbReference type="PhylomeDB" id="Q9CQ74"/>
<dbReference type="TreeFam" id="TF313689"/>
<dbReference type="BioGRID-ORCS" id="68192">
    <property type="hits" value="6 hits in 76 CRISPR screens"/>
</dbReference>
<dbReference type="ChiTaRS" id="Leprotl1">
    <property type="organism name" value="mouse"/>
</dbReference>
<dbReference type="PRO" id="PR:Q9CQ74"/>
<dbReference type="Proteomes" id="UP000000589">
    <property type="component" value="Chromosome 8"/>
</dbReference>
<dbReference type="RNAct" id="Q9CQ74">
    <property type="molecule type" value="protein"/>
</dbReference>
<dbReference type="Bgee" id="ENSMUSG00000031513">
    <property type="expression patterns" value="Expressed in ventral horn of spinal cord and 246 other cell types or tissues"/>
</dbReference>
<dbReference type="GO" id="GO:0016020">
    <property type="term" value="C:membrane"/>
    <property type="evidence" value="ECO:0007669"/>
    <property type="project" value="UniProtKB-SubCell"/>
</dbReference>
<dbReference type="GO" id="GO:0042802">
    <property type="term" value="F:identical protein binding"/>
    <property type="evidence" value="ECO:0007669"/>
    <property type="project" value="Ensembl"/>
</dbReference>
<dbReference type="InterPro" id="IPR007262">
    <property type="entry name" value="Vps55/LEPROT"/>
</dbReference>
<dbReference type="PANTHER" id="PTHR12050:SF4">
    <property type="entry name" value="LEPTIN RECEPTOR OVERLAPPING TRANSCRIPT-LIKE 1"/>
    <property type="match status" value="1"/>
</dbReference>
<dbReference type="PANTHER" id="PTHR12050">
    <property type="entry name" value="LEPTIN RECEPTOR-RELATED"/>
    <property type="match status" value="1"/>
</dbReference>
<dbReference type="Pfam" id="PF04133">
    <property type="entry name" value="Vps55"/>
    <property type="match status" value="1"/>
</dbReference>
<gene>
    <name type="primary">Leprotl1</name>
</gene>
<name>LERL1_MOUSE</name>
<evidence type="ECO:0000250" key="1"/>
<evidence type="ECO:0000255" key="2"/>
<evidence type="ECO:0000269" key="3">
    <source>
    </source>
</evidence>
<evidence type="ECO:0000305" key="4"/>
<protein>
    <recommendedName>
        <fullName>Leptin receptor overlapping transcript-like 1</fullName>
    </recommendedName>
    <alternativeName>
        <fullName>Endospanin-2</fullName>
    </alternativeName>
</protein>